<geneLocation type="plasmid">
    <name>pPD1222</name>
</geneLocation>
<protein>
    <recommendedName>
        <fullName evidence="1">Bifunctional protein FolD 2</fullName>
    </recommendedName>
    <domain>
        <recommendedName>
            <fullName evidence="1">Methylenetetrahydrofolate dehydrogenase</fullName>
            <ecNumber evidence="1">1.5.1.5</ecNumber>
        </recommendedName>
    </domain>
    <domain>
        <recommendedName>
            <fullName evidence="1">Methenyltetrahydrofolate cyclohydrolase</fullName>
            <ecNumber evidence="1">3.5.4.9</ecNumber>
        </recommendedName>
    </domain>
</protein>
<reference key="1">
    <citation type="submission" date="2006-12" db="EMBL/GenBank/DDBJ databases">
        <title>Complete sequence of plasmid 1 of Paracoccus denitrificans PD1222.</title>
        <authorList>
            <person name="Copeland A."/>
            <person name="Lucas S."/>
            <person name="Lapidus A."/>
            <person name="Barry K."/>
            <person name="Detter J.C."/>
            <person name="Glavina del Rio T."/>
            <person name="Hammon N."/>
            <person name="Israni S."/>
            <person name="Dalin E."/>
            <person name="Tice H."/>
            <person name="Pitluck S."/>
            <person name="Munk A.C."/>
            <person name="Brettin T."/>
            <person name="Bruce D."/>
            <person name="Han C."/>
            <person name="Tapia R."/>
            <person name="Gilna P."/>
            <person name="Schmutz J."/>
            <person name="Larimer F."/>
            <person name="Land M."/>
            <person name="Hauser L."/>
            <person name="Kyrpides N."/>
            <person name="Lykidis A."/>
            <person name="Spiro S."/>
            <person name="Richardson D.J."/>
            <person name="Moir J.W.B."/>
            <person name="Ferguson S.J."/>
            <person name="van Spanning R.J.M."/>
            <person name="Richardson P."/>
        </authorList>
    </citation>
    <scope>NUCLEOTIDE SEQUENCE [LARGE SCALE GENOMIC DNA]</scope>
    <source>
        <strain>Pd 1222</strain>
    </source>
</reference>
<comment type="function">
    <text evidence="1">Catalyzes the oxidation of 5,10-methylenetetrahydrofolate to 5,10-methenyltetrahydrofolate and then the hydrolysis of 5,10-methenyltetrahydrofolate to 10-formyltetrahydrofolate.</text>
</comment>
<comment type="catalytic activity">
    <reaction evidence="1">
        <text>(6R)-5,10-methylene-5,6,7,8-tetrahydrofolate + NADP(+) = (6R)-5,10-methenyltetrahydrofolate + NADPH</text>
        <dbReference type="Rhea" id="RHEA:22812"/>
        <dbReference type="ChEBI" id="CHEBI:15636"/>
        <dbReference type="ChEBI" id="CHEBI:57455"/>
        <dbReference type="ChEBI" id="CHEBI:57783"/>
        <dbReference type="ChEBI" id="CHEBI:58349"/>
        <dbReference type="EC" id="1.5.1.5"/>
    </reaction>
</comment>
<comment type="catalytic activity">
    <reaction evidence="1">
        <text>(6R)-5,10-methenyltetrahydrofolate + H2O = (6R)-10-formyltetrahydrofolate + H(+)</text>
        <dbReference type="Rhea" id="RHEA:23700"/>
        <dbReference type="ChEBI" id="CHEBI:15377"/>
        <dbReference type="ChEBI" id="CHEBI:15378"/>
        <dbReference type="ChEBI" id="CHEBI:57455"/>
        <dbReference type="ChEBI" id="CHEBI:195366"/>
        <dbReference type="EC" id="3.5.4.9"/>
    </reaction>
</comment>
<comment type="pathway">
    <text evidence="1">One-carbon metabolism; tetrahydrofolate interconversion.</text>
</comment>
<comment type="subunit">
    <text evidence="1">Homodimer.</text>
</comment>
<comment type="similarity">
    <text evidence="1">Belongs to the tetrahydrofolate dehydrogenase/cyclohydrolase family.</text>
</comment>
<sequence>MAARNGGTIIDGKAFASGVRGRVASAVAGLEAAHGVVPGLAVVLVGEDPASQVYVRNKGIQTREAGMASFEHKLPAETAQAELMALIERLNADPAVHGILVQLPLPRHMDAEAVINAIDPKKDVDGFHVLNVGLLGTGQKAMVPCTPLGCLMLLRDTLGDLSGLNAVVVGRSNIVGKPMAQLLLNESCTVTIAHSRTRDLAGLCRTADILVAAVGRPRMIRGDWIKPGATVIDVGINRIEEAGRSRLVGDVDFDSAAPVAGAITPVPGGVGPMTIACLLANTLTACCRANGLPEPDFAEAGG</sequence>
<gene>
    <name evidence="1" type="primary">folD2</name>
    <name type="ordered locus">Pden_4905</name>
</gene>
<dbReference type="EC" id="1.5.1.5" evidence="1"/>
<dbReference type="EC" id="3.5.4.9" evidence="1"/>
<dbReference type="EMBL" id="CP000491">
    <property type="protein sequence ID" value="ABL72965.1"/>
    <property type="molecule type" value="Genomic_DNA"/>
</dbReference>
<dbReference type="RefSeq" id="WP_011751123.1">
    <property type="nucleotide sequence ID" value="NC_008688.1"/>
</dbReference>
<dbReference type="SMR" id="A1BBS1"/>
<dbReference type="EnsemblBacteria" id="ABL72965">
    <property type="protein sequence ID" value="ABL72965"/>
    <property type="gene ID" value="Pden_4905"/>
</dbReference>
<dbReference type="KEGG" id="pde:Pden_4905"/>
<dbReference type="eggNOG" id="COG0190">
    <property type="taxonomic scope" value="Bacteria"/>
</dbReference>
<dbReference type="HOGENOM" id="CLU_034045_2_1_5"/>
<dbReference type="OrthoDB" id="9803580at2"/>
<dbReference type="UniPathway" id="UPA00193"/>
<dbReference type="Proteomes" id="UP000000361">
    <property type="component" value="Plasmid pPD1222"/>
</dbReference>
<dbReference type="GO" id="GO:0005829">
    <property type="term" value="C:cytosol"/>
    <property type="evidence" value="ECO:0007669"/>
    <property type="project" value="TreeGrafter"/>
</dbReference>
<dbReference type="GO" id="GO:0004477">
    <property type="term" value="F:methenyltetrahydrofolate cyclohydrolase activity"/>
    <property type="evidence" value="ECO:0007669"/>
    <property type="project" value="UniProtKB-UniRule"/>
</dbReference>
<dbReference type="GO" id="GO:0004488">
    <property type="term" value="F:methylenetetrahydrofolate dehydrogenase (NADP+) activity"/>
    <property type="evidence" value="ECO:0007669"/>
    <property type="project" value="UniProtKB-UniRule"/>
</dbReference>
<dbReference type="GO" id="GO:0000105">
    <property type="term" value="P:L-histidine biosynthetic process"/>
    <property type="evidence" value="ECO:0007669"/>
    <property type="project" value="UniProtKB-KW"/>
</dbReference>
<dbReference type="GO" id="GO:0009086">
    <property type="term" value="P:methionine biosynthetic process"/>
    <property type="evidence" value="ECO:0007669"/>
    <property type="project" value="UniProtKB-KW"/>
</dbReference>
<dbReference type="GO" id="GO:0006164">
    <property type="term" value="P:purine nucleotide biosynthetic process"/>
    <property type="evidence" value="ECO:0007669"/>
    <property type="project" value="UniProtKB-KW"/>
</dbReference>
<dbReference type="GO" id="GO:0035999">
    <property type="term" value="P:tetrahydrofolate interconversion"/>
    <property type="evidence" value="ECO:0007669"/>
    <property type="project" value="UniProtKB-UniRule"/>
</dbReference>
<dbReference type="CDD" id="cd01080">
    <property type="entry name" value="NAD_bind_m-THF_DH_Cyclohyd"/>
    <property type="match status" value="1"/>
</dbReference>
<dbReference type="FunFam" id="3.40.50.720:FF:000006">
    <property type="entry name" value="Bifunctional protein FolD"/>
    <property type="match status" value="1"/>
</dbReference>
<dbReference type="FunFam" id="3.40.50.10860:FF:000005">
    <property type="entry name" value="C-1-tetrahydrofolate synthase, cytoplasmic, putative"/>
    <property type="match status" value="1"/>
</dbReference>
<dbReference type="Gene3D" id="3.40.50.10860">
    <property type="entry name" value="Leucine Dehydrogenase, chain A, domain 1"/>
    <property type="match status" value="1"/>
</dbReference>
<dbReference type="Gene3D" id="3.40.50.720">
    <property type="entry name" value="NAD(P)-binding Rossmann-like Domain"/>
    <property type="match status" value="1"/>
</dbReference>
<dbReference type="HAMAP" id="MF_01576">
    <property type="entry name" value="THF_DHG_CYH"/>
    <property type="match status" value="1"/>
</dbReference>
<dbReference type="InterPro" id="IPR046346">
    <property type="entry name" value="Aminoacid_DH-like_N_sf"/>
</dbReference>
<dbReference type="InterPro" id="IPR036291">
    <property type="entry name" value="NAD(P)-bd_dom_sf"/>
</dbReference>
<dbReference type="InterPro" id="IPR000672">
    <property type="entry name" value="THF_DH/CycHdrlase"/>
</dbReference>
<dbReference type="InterPro" id="IPR020630">
    <property type="entry name" value="THF_DH/CycHdrlase_cat_dom"/>
</dbReference>
<dbReference type="InterPro" id="IPR020867">
    <property type="entry name" value="THF_DH/CycHdrlase_CS"/>
</dbReference>
<dbReference type="InterPro" id="IPR020631">
    <property type="entry name" value="THF_DH/CycHdrlase_NAD-bd_dom"/>
</dbReference>
<dbReference type="NCBIfam" id="NF008058">
    <property type="entry name" value="PRK10792.1"/>
    <property type="match status" value="1"/>
</dbReference>
<dbReference type="NCBIfam" id="NF010783">
    <property type="entry name" value="PRK14186.1"/>
    <property type="match status" value="1"/>
</dbReference>
<dbReference type="NCBIfam" id="NF010785">
    <property type="entry name" value="PRK14188.1"/>
    <property type="match status" value="1"/>
</dbReference>
<dbReference type="PANTHER" id="PTHR48099:SF5">
    <property type="entry name" value="C-1-TETRAHYDROFOLATE SYNTHASE, CYTOPLASMIC"/>
    <property type="match status" value="1"/>
</dbReference>
<dbReference type="PANTHER" id="PTHR48099">
    <property type="entry name" value="C-1-TETRAHYDROFOLATE SYNTHASE, CYTOPLASMIC-RELATED"/>
    <property type="match status" value="1"/>
</dbReference>
<dbReference type="Pfam" id="PF00763">
    <property type="entry name" value="THF_DHG_CYH"/>
    <property type="match status" value="1"/>
</dbReference>
<dbReference type="Pfam" id="PF02882">
    <property type="entry name" value="THF_DHG_CYH_C"/>
    <property type="match status" value="1"/>
</dbReference>
<dbReference type="PRINTS" id="PR00085">
    <property type="entry name" value="THFDHDRGNASE"/>
</dbReference>
<dbReference type="SUPFAM" id="SSF53223">
    <property type="entry name" value="Aminoacid dehydrogenase-like, N-terminal domain"/>
    <property type="match status" value="1"/>
</dbReference>
<dbReference type="SUPFAM" id="SSF51735">
    <property type="entry name" value="NAD(P)-binding Rossmann-fold domains"/>
    <property type="match status" value="1"/>
</dbReference>
<dbReference type="PROSITE" id="PS00766">
    <property type="entry name" value="THF_DHG_CYH_1"/>
    <property type="match status" value="1"/>
</dbReference>
<dbReference type="PROSITE" id="PS00767">
    <property type="entry name" value="THF_DHG_CYH_2"/>
    <property type="match status" value="1"/>
</dbReference>
<proteinExistence type="inferred from homology"/>
<accession>A1BBS1</accession>
<name>FOLD2_PARDP</name>
<organism>
    <name type="scientific">Paracoccus denitrificans (strain Pd 1222)</name>
    <dbReference type="NCBI Taxonomy" id="318586"/>
    <lineage>
        <taxon>Bacteria</taxon>
        <taxon>Pseudomonadati</taxon>
        <taxon>Pseudomonadota</taxon>
        <taxon>Alphaproteobacteria</taxon>
        <taxon>Rhodobacterales</taxon>
        <taxon>Paracoccaceae</taxon>
        <taxon>Paracoccus</taxon>
    </lineage>
</organism>
<evidence type="ECO:0000255" key="1">
    <source>
        <dbReference type="HAMAP-Rule" id="MF_01576"/>
    </source>
</evidence>
<keyword id="KW-0028">Amino-acid biosynthesis</keyword>
<keyword id="KW-0368">Histidine biosynthesis</keyword>
<keyword id="KW-0378">Hydrolase</keyword>
<keyword id="KW-0486">Methionine biosynthesis</keyword>
<keyword id="KW-0511">Multifunctional enzyme</keyword>
<keyword id="KW-0521">NADP</keyword>
<keyword id="KW-0554">One-carbon metabolism</keyword>
<keyword id="KW-0560">Oxidoreductase</keyword>
<keyword id="KW-0614">Plasmid</keyword>
<keyword id="KW-0658">Purine biosynthesis</keyword>
<keyword id="KW-1185">Reference proteome</keyword>
<feature type="chain" id="PRO_0000340586" description="Bifunctional protein FolD 2">
    <location>
        <begin position="1"/>
        <end position="302"/>
    </location>
</feature>
<feature type="binding site" evidence="1">
    <location>
        <begin position="170"/>
        <end position="172"/>
    </location>
    <ligand>
        <name>NADP(+)</name>
        <dbReference type="ChEBI" id="CHEBI:58349"/>
    </ligand>
</feature>
<feature type="binding site" evidence="1">
    <location>
        <position position="195"/>
    </location>
    <ligand>
        <name>NADP(+)</name>
        <dbReference type="ChEBI" id="CHEBI:58349"/>
    </ligand>
</feature>
<feature type="binding site" evidence="1">
    <location>
        <position position="236"/>
    </location>
    <ligand>
        <name>NADP(+)</name>
        <dbReference type="ChEBI" id="CHEBI:58349"/>
    </ligand>
</feature>